<proteinExistence type="inferred from homology"/>
<accession>Q8UEL1</accession>
<gene>
    <name evidence="1" type="primary">thrS</name>
    <name type="ordered locus">Atu1746</name>
    <name type="ORF">AGR_C_3205</name>
</gene>
<protein>
    <recommendedName>
        <fullName evidence="1">Threonine--tRNA ligase</fullName>
        <ecNumber evidence="1">6.1.1.3</ecNumber>
    </recommendedName>
    <alternativeName>
        <fullName evidence="1">Threonyl-tRNA synthetase</fullName>
        <shortName evidence="1">ThrRS</shortName>
    </alternativeName>
</protein>
<keyword id="KW-0030">Aminoacyl-tRNA synthetase</keyword>
<keyword id="KW-0067">ATP-binding</keyword>
<keyword id="KW-0963">Cytoplasm</keyword>
<keyword id="KW-0436">Ligase</keyword>
<keyword id="KW-0479">Metal-binding</keyword>
<keyword id="KW-0547">Nucleotide-binding</keyword>
<keyword id="KW-0648">Protein biosynthesis</keyword>
<keyword id="KW-1185">Reference proteome</keyword>
<keyword id="KW-0694">RNA-binding</keyword>
<keyword id="KW-0820">tRNA-binding</keyword>
<keyword id="KW-0862">Zinc</keyword>
<feature type="chain" id="PRO_0000100931" description="Threonine--tRNA ligase">
    <location>
        <begin position="1"/>
        <end position="667"/>
    </location>
</feature>
<feature type="domain" description="TGS" evidence="2">
    <location>
        <begin position="1"/>
        <end position="64"/>
    </location>
</feature>
<feature type="region of interest" description="Catalytic" evidence="1">
    <location>
        <begin position="245"/>
        <end position="553"/>
    </location>
</feature>
<feature type="binding site" evidence="1">
    <location>
        <position position="347"/>
    </location>
    <ligand>
        <name>Zn(2+)</name>
        <dbReference type="ChEBI" id="CHEBI:29105"/>
    </ligand>
</feature>
<feature type="binding site" evidence="1">
    <location>
        <position position="398"/>
    </location>
    <ligand>
        <name>Zn(2+)</name>
        <dbReference type="ChEBI" id="CHEBI:29105"/>
    </ligand>
</feature>
<feature type="binding site" evidence="1">
    <location>
        <position position="530"/>
    </location>
    <ligand>
        <name>Zn(2+)</name>
        <dbReference type="ChEBI" id="CHEBI:29105"/>
    </ligand>
</feature>
<evidence type="ECO:0000255" key="1">
    <source>
        <dbReference type="HAMAP-Rule" id="MF_00184"/>
    </source>
</evidence>
<evidence type="ECO:0000255" key="2">
    <source>
        <dbReference type="PROSITE-ProRule" id="PRU01228"/>
    </source>
</evidence>
<dbReference type="EC" id="6.1.1.3" evidence="1"/>
<dbReference type="EMBL" id="AE007869">
    <property type="protein sequence ID" value="AAK87515.1"/>
    <property type="molecule type" value="Genomic_DNA"/>
</dbReference>
<dbReference type="PIR" id="AC2791">
    <property type="entry name" value="AC2791"/>
</dbReference>
<dbReference type="PIR" id="B97570">
    <property type="entry name" value="B97570"/>
</dbReference>
<dbReference type="RefSeq" id="NP_354730.1">
    <property type="nucleotide sequence ID" value="NC_003062.2"/>
</dbReference>
<dbReference type="RefSeq" id="WP_006314349.1">
    <property type="nucleotide sequence ID" value="NC_003062.2"/>
</dbReference>
<dbReference type="SMR" id="Q8UEL1"/>
<dbReference type="STRING" id="176299.Atu1746"/>
<dbReference type="EnsemblBacteria" id="AAK87515">
    <property type="protein sequence ID" value="AAK87515"/>
    <property type="gene ID" value="Atu1746"/>
</dbReference>
<dbReference type="GeneID" id="1133784"/>
<dbReference type="KEGG" id="atu:Atu1746"/>
<dbReference type="PATRIC" id="fig|176299.10.peg.1758"/>
<dbReference type="eggNOG" id="COG0441">
    <property type="taxonomic scope" value="Bacteria"/>
</dbReference>
<dbReference type="HOGENOM" id="CLU_008554_0_1_5"/>
<dbReference type="OrthoDB" id="9802304at2"/>
<dbReference type="PhylomeDB" id="Q8UEL1"/>
<dbReference type="BioCyc" id="AGRO:ATU1746-MONOMER"/>
<dbReference type="Proteomes" id="UP000000813">
    <property type="component" value="Chromosome circular"/>
</dbReference>
<dbReference type="GO" id="GO:0005829">
    <property type="term" value="C:cytosol"/>
    <property type="evidence" value="ECO:0007669"/>
    <property type="project" value="TreeGrafter"/>
</dbReference>
<dbReference type="GO" id="GO:0005524">
    <property type="term" value="F:ATP binding"/>
    <property type="evidence" value="ECO:0007669"/>
    <property type="project" value="UniProtKB-UniRule"/>
</dbReference>
<dbReference type="GO" id="GO:0046872">
    <property type="term" value="F:metal ion binding"/>
    <property type="evidence" value="ECO:0007669"/>
    <property type="project" value="UniProtKB-KW"/>
</dbReference>
<dbReference type="GO" id="GO:0004829">
    <property type="term" value="F:threonine-tRNA ligase activity"/>
    <property type="evidence" value="ECO:0007669"/>
    <property type="project" value="UniProtKB-UniRule"/>
</dbReference>
<dbReference type="GO" id="GO:0000049">
    <property type="term" value="F:tRNA binding"/>
    <property type="evidence" value="ECO:0007669"/>
    <property type="project" value="UniProtKB-KW"/>
</dbReference>
<dbReference type="GO" id="GO:0006435">
    <property type="term" value="P:threonyl-tRNA aminoacylation"/>
    <property type="evidence" value="ECO:0007669"/>
    <property type="project" value="UniProtKB-UniRule"/>
</dbReference>
<dbReference type="CDD" id="cd01667">
    <property type="entry name" value="TGS_ThrRS"/>
    <property type="match status" value="1"/>
</dbReference>
<dbReference type="CDD" id="cd00860">
    <property type="entry name" value="ThrRS_anticodon"/>
    <property type="match status" value="1"/>
</dbReference>
<dbReference type="CDD" id="cd00771">
    <property type="entry name" value="ThrRS_core"/>
    <property type="match status" value="1"/>
</dbReference>
<dbReference type="FunFam" id="3.30.54.20:FF:000002">
    <property type="entry name" value="Threonine--tRNA ligase"/>
    <property type="match status" value="1"/>
</dbReference>
<dbReference type="FunFam" id="3.30.930.10:FF:000002">
    <property type="entry name" value="Threonine--tRNA ligase"/>
    <property type="match status" value="1"/>
</dbReference>
<dbReference type="FunFam" id="3.40.50.800:FF:000001">
    <property type="entry name" value="Threonine--tRNA ligase"/>
    <property type="match status" value="1"/>
</dbReference>
<dbReference type="FunFam" id="3.30.980.10:FF:000005">
    <property type="entry name" value="Threonyl-tRNA synthetase, mitochondrial"/>
    <property type="match status" value="1"/>
</dbReference>
<dbReference type="Gene3D" id="3.10.20.30">
    <property type="match status" value="1"/>
</dbReference>
<dbReference type="Gene3D" id="3.30.54.20">
    <property type="match status" value="1"/>
</dbReference>
<dbReference type="Gene3D" id="3.40.50.800">
    <property type="entry name" value="Anticodon-binding domain"/>
    <property type="match status" value="1"/>
</dbReference>
<dbReference type="Gene3D" id="3.30.930.10">
    <property type="entry name" value="Bira Bifunctional Protein, Domain 2"/>
    <property type="match status" value="1"/>
</dbReference>
<dbReference type="Gene3D" id="3.30.980.10">
    <property type="entry name" value="Threonyl-trna Synthetase, Chain A, domain 2"/>
    <property type="match status" value="1"/>
</dbReference>
<dbReference type="HAMAP" id="MF_00184">
    <property type="entry name" value="Thr_tRNA_synth"/>
    <property type="match status" value="1"/>
</dbReference>
<dbReference type="InterPro" id="IPR002314">
    <property type="entry name" value="aa-tRNA-synt_IIb"/>
</dbReference>
<dbReference type="InterPro" id="IPR006195">
    <property type="entry name" value="aa-tRNA-synth_II"/>
</dbReference>
<dbReference type="InterPro" id="IPR045864">
    <property type="entry name" value="aa-tRNA-synth_II/BPL/LPL"/>
</dbReference>
<dbReference type="InterPro" id="IPR004154">
    <property type="entry name" value="Anticodon-bd"/>
</dbReference>
<dbReference type="InterPro" id="IPR036621">
    <property type="entry name" value="Anticodon-bd_dom_sf"/>
</dbReference>
<dbReference type="InterPro" id="IPR012675">
    <property type="entry name" value="Beta-grasp_dom_sf"/>
</dbReference>
<dbReference type="InterPro" id="IPR004095">
    <property type="entry name" value="TGS"/>
</dbReference>
<dbReference type="InterPro" id="IPR012676">
    <property type="entry name" value="TGS-like"/>
</dbReference>
<dbReference type="InterPro" id="IPR002320">
    <property type="entry name" value="Thr-tRNA-ligase_IIa"/>
</dbReference>
<dbReference type="InterPro" id="IPR018163">
    <property type="entry name" value="Thr/Ala-tRNA-synth_IIc_edit"/>
</dbReference>
<dbReference type="InterPro" id="IPR047246">
    <property type="entry name" value="ThrRS_anticodon"/>
</dbReference>
<dbReference type="InterPro" id="IPR033728">
    <property type="entry name" value="ThrRS_core"/>
</dbReference>
<dbReference type="InterPro" id="IPR012947">
    <property type="entry name" value="tRNA_SAD"/>
</dbReference>
<dbReference type="NCBIfam" id="TIGR00418">
    <property type="entry name" value="thrS"/>
    <property type="match status" value="1"/>
</dbReference>
<dbReference type="PANTHER" id="PTHR11451:SF44">
    <property type="entry name" value="THREONINE--TRNA LIGASE, CHLOROPLASTIC_MITOCHONDRIAL 2"/>
    <property type="match status" value="1"/>
</dbReference>
<dbReference type="PANTHER" id="PTHR11451">
    <property type="entry name" value="THREONINE-TRNA LIGASE"/>
    <property type="match status" value="1"/>
</dbReference>
<dbReference type="Pfam" id="PF03129">
    <property type="entry name" value="HGTP_anticodon"/>
    <property type="match status" value="1"/>
</dbReference>
<dbReference type="Pfam" id="PF02824">
    <property type="entry name" value="TGS"/>
    <property type="match status" value="1"/>
</dbReference>
<dbReference type="Pfam" id="PF00587">
    <property type="entry name" value="tRNA-synt_2b"/>
    <property type="match status" value="1"/>
</dbReference>
<dbReference type="Pfam" id="PF07973">
    <property type="entry name" value="tRNA_SAD"/>
    <property type="match status" value="1"/>
</dbReference>
<dbReference type="PRINTS" id="PR01047">
    <property type="entry name" value="TRNASYNTHTHR"/>
</dbReference>
<dbReference type="SMART" id="SM00863">
    <property type="entry name" value="tRNA_SAD"/>
    <property type="match status" value="1"/>
</dbReference>
<dbReference type="SUPFAM" id="SSF52954">
    <property type="entry name" value="Class II aaRS ABD-related"/>
    <property type="match status" value="1"/>
</dbReference>
<dbReference type="SUPFAM" id="SSF55681">
    <property type="entry name" value="Class II aaRS and biotin synthetases"/>
    <property type="match status" value="1"/>
</dbReference>
<dbReference type="SUPFAM" id="SSF81271">
    <property type="entry name" value="TGS-like"/>
    <property type="match status" value="1"/>
</dbReference>
<dbReference type="SUPFAM" id="SSF55186">
    <property type="entry name" value="ThrRS/AlaRS common domain"/>
    <property type="match status" value="1"/>
</dbReference>
<dbReference type="PROSITE" id="PS50862">
    <property type="entry name" value="AA_TRNA_LIGASE_II"/>
    <property type="match status" value="1"/>
</dbReference>
<dbReference type="PROSITE" id="PS51880">
    <property type="entry name" value="TGS"/>
    <property type="match status" value="1"/>
</dbReference>
<reference key="1">
    <citation type="journal article" date="2001" name="Science">
        <title>The genome of the natural genetic engineer Agrobacterium tumefaciens C58.</title>
        <authorList>
            <person name="Wood D.W."/>
            <person name="Setubal J.C."/>
            <person name="Kaul R."/>
            <person name="Monks D.E."/>
            <person name="Kitajima J.P."/>
            <person name="Okura V.K."/>
            <person name="Zhou Y."/>
            <person name="Chen L."/>
            <person name="Wood G.E."/>
            <person name="Almeida N.F. Jr."/>
            <person name="Woo L."/>
            <person name="Chen Y."/>
            <person name="Paulsen I.T."/>
            <person name="Eisen J.A."/>
            <person name="Karp P.D."/>
            <person name="Bovee D. Sr."/>
            <person name="Chapman P."/>
            <person name="Clendenning J."/>
            <person name="Deatherage G."/>
            <person name="Gillet W."/>
            <person name="Grant C."/>
            <person name="Kutyavin T."/>
            <person name="Levy R."/>
            <person name="Li M.-J."/>
            <person name="McClelland E."/>
            <person name="Palmieri A."/>
            <person name="Raymond C."/>
            <person name="Rouse G."/>
            <person name="Saenphimmachak C."/>
            <person name="Wu Z."/>
            <person name="Romero P."/>
            <person name="Gordon D."/>
            <person name="Zhang S."/>
            <person name="Yoo H."/>
            <person name="Tao Y."/>
            <person name="Biddle P."/>
            <person name="Jung M."/>
            <person name="Krespan W."/>
            <person name="Perry M."/>
            <person name="Gordon-Kamm B."/>
            <person name="Liao L."/>
            <person name="Kim S."/>
            <person name="Hendrick C."/>
            <person name="Zhao Z.-Y."/>
            <person name="Dolan M."/>
            <person name="Chumley F."/>
            <person name="Tingey S.V."/>
            <person name="Tomb J.-F."/>
            <person name="Gordon M.P."/>
            <person name="Olson M.V."/>
            <person name="Nester E.W."/>
        </authorList>
    </citation>
    <scope>NUCLEOTIDE SEQUENCE [LARGE SCALE GENOMIC DNA]</scope>
    <source>
        <strain>C58 / ATCC 33970</strain>
    </source>
</reference>
<reference key="2">
    <citation type="journal article" date="2001" name="Science">
        <title>Genome sequence of the plant pathogen and biotechnology agent Agrobacterium tumefaciens C58.</title>
        <authorList>
            <person name="Goodner B."/>
            <person name="Hinkle G."/>
            <person name="Gattung S."/>
            <person name="Miller N."/>
            <person name="Blanchard M."/>
            <person name="Qurollo B."/>
            <person name="Goldman B.S."/>
            <person name="Cao Y."/>
            <person name="Askenazi M."/>
            <person name="Halling C."/>
            <person name="Mullin L."/>
            <person name="Houmiel K."/>
            <person name="Gordon J."/>
            <person name="Vaudin M."/>
            <person name="Iartchouk O."/>
            <person name="Epp A."/>
            <person name="Liu F."/>
            <person name="Wollam C."/>
            <person name="Allinger M."/>
            <person name="Doughty D."/>
            <person name="Scott C."/>
            <person name="Lappas C."/>
            <person name="Markelz B."/>
            <person name="Flanagan C."/>
            <person name="Crowell C."/>
            <person name="Gurson J."/>
            <person name="Lomo C."/>
            <person name="Sear C."/>
            <person name="Strub G."/>
            <person name="Cielo C."/>
            <person name="Slater S."/>
        </authorList>
    </citation>
    <scope>NUCLEOTIDE SEQUENCE [LARGE SCALE GENOMIC DNA]</scope>
    <source>
        <strain>C58 / ATCC 33970</strain>
    </source>
</reference>
<organism>
    <name type="scientific">Agrobacterium fabrum (strain C58 / ATCC 33970)</name>
    <name type="common">Agrobacterium tumefaciens (strain C58)</name>
    <dbReference type="NCBI Taxonomy" id="176299"/>
    <lineage>
        <taxon>Bacteria</taxon>
        <taxon>Pseudomonadati</taxon>
        <taxon>Pseudomonadota</taxon>
        <taxon>Alphaproteobacteria</taxon>
        <taxon>Hyphomicrobiales</taxon>
        <taxon>Rhizobiaceae</taxon>
        <taxon>Rhizobium/Agrobacterium group</taxon>
        <taxon>Agrobacterium</taxon>
        <taxon>Agrobacterium tumefaciens complex</taxon>
    </lineage>
</organism>
<name>SYT_AGRFC</name>
<comment type="function">
    <text evidence="1">Catalyzes the attachment of threonine to tRNA(Thr) in a two-step reaction: L-threonine is first activated by ATP to form Thr-AMP and then transferred to the acceptor end of tRNA(Thr). Also edits incorrectly charged L-seryl-tRNA(Thr).</text>
</comment>
<comment type="catalytic activity">
    <reaction evidence="1">
        <text>tRNA(Thr) + L-threonine + ATP = L-threonyl-tRNA(Thr) + AMP + diphosphate + H(+)</text>
        <dbReference type="Rhea" id="RHEA:24624"/>
        <dbReference type="Rhea" id="RHEA-COMP:9670"/>
        <dbReference type="Rhea" id="RHEA-COMP:9704"/>
        <dbReference type="ChEBI" id="CHEBI:15378"/>
        <dbReference type="ChEBI" id="CHEBI:30616"/>
        <dbReference type="ChEBI" id="CHEBI:33019"/>
        <dbReference type="ChEBI" id="CHEBI:57926"/>
        <dbReference type="ChEBI" id="CHEBI:78442"/>
        <dbReference type="ChEBI" id="CHEBI:78534"/>
        <dbReference type="ChEBI" id="CHEBI:456215"/>
        <dbReference type="EC" id="6.1.1.3"/>
    </reaction>
</comment>
<comment type="cofactor">
    <cofactor evidence="1">
        <name>Zn(2+)</name>
        <dbReference type="ChEBI" id="CHEBI:29105"/>
    </cofactor>
    <text evidence="1">Binds 1 zinc ion per subunit.</text>
</comment>
<comment type="subunit">
    <text evidence="1">Homodimer.</text>
</comment>
<comment type="subcellular location">
    <subcellularLocation>
        <location evidence="1">Cytoplasm</location>
    </subcellularLocation>
</comment>
<comment type="similarity">
    <text evidence="1">Belongs to the class-II aminoacyl-tRNA synthetase family.</text>
</comment>
<sequence length="667" mass="75629">MSEAISLTFPDGSVRSYPAGTTGREVAESISKSLAKKAVAIALDGTVRDLSETITDGKIEIVTREDGRALELIRHDAAHVMAEAVQELWPGTQVTIGPVIENGFYYDFAKNEPFTPEDLPKIEKRMKEIIQRNKPFTREIWSREKAKEVFAAKGENYKVELVDAIPEGQDLKIYYQGDWFDLCRGPHMASTGQIGTAFKLMKVAGAYWRGDSNNAMLSRIYGTAWATQEELDNYLHVLAEAEKRDHRRLGREMDLFHFQEEGPGVVFWHGKGWRMFQTLTAYMRRRLANTYQEVNAPQVLDKSLWETSGHWGWYQENMFAVKSAHAFTHPDDKEADQRVFALKPMNCPGHVQIFKHGLKSYREMPVRLAEFGNVHRYEASGALHGLMRVRGFTQDDAHVFCTEEQMAAECLRINDLILSVYEDFGFSEIVVKLSTRPEKRVGSDDLWDRAESVMLEVLKTIEEQSGGRIKTGILPGEGAFYGPKFEYTLKDAIGREWQCGTTQVDFNLPERFGAFYIDQNSEKTQPVMIHRAICGSMERFLGILIENFAGHMPLWFAPLQVVVATITSDADDYGREVAEALREAGMAVETDFRNEKINYKVREHSVTKVPVIIVCGRKEAEERTVNIRRLGSQNQTSMSLEEAITSLVDEATPPDVKRKLAAKKQLA</sequence>